<comment type="function">
    <text evidence="1">Reversibly catalyzes the transfer of the carbamoyl group from carbamoyl phosphate (CP) to the N(epsilon) atom of ornithine (ORN) to produce L-citrulline.</text>
</comment>
<comment type="catalytic activity">
    <reaction evidence="2">
        <text>carbamoyl phosphate + L-ornithine = L-citrulline + phosphate + H(+)</text>
        <dbReference type="Rhea" id="RHEA:19513"/>
        <dbReference type="ChEBI" id="CHEBI:15378"/>
        <dbReference type="ChEBI" id="CHEBI:43474"/>
        <dbReference type="ChEBI" id="CHEBI:46911"/>
        <dbReference type="ChEBI" id="CHEBI:57743"/>
        <dbReference type="ChEBI" id="CHEBI:58228"/>
        <dbReference type="EC" id="2.1.3.3"/>
    </reaction>
</comment>
<comment type="pathway">
    <text evidence="2">Amino-acid biosynthesis; L-arginine biosynthesis; L-arginine from L-ornithine and carbamoyl phosphate: step 1/3.</text>
</comment>
<comment type="subcellular location">
    <subcellularLocation>
        <location evidence="2">Cytoplasm</location>
    </subcellularLocation>
</comment>
<comment type="similarity">
    <text evidence="2">Belongs to the aspartate/ornithine carbamoyltransferase superfamily. OTCase family.</text>
</comment>
<dbReference type="EC" id="2.1.3.3" evidence="2"/>
<dbReference type="EMBL" id="CP000946">
    <property type="protein sequence ID" value="ACA79365.1"/>
    <property type="molecule type" value="Genomic_DNA"/>
</dbReference>
<dbReference type="SMR" id="B1ISV4"/>
<dbReference type="KEGG" id="ecl:EcolC_3758"/>
<dbReference type="HOGENOM" id="CLU_043846_3_1_6"/>
<dbReference type="UniPathway" id="UPA00068">
    <property type="reaction ID" value="UER00112"/>
</dbReference>
<dbReference type="GO" id="GO:0005737">
    <property type="term" value="C:cytoplasm"/>
    <property type="evidence" value="ECO:0007669"/>
    <property type="project" value="UniProtKB-SubCell"/>
</dbReference>
<dbReference type="GO" id="GO:0016597">
    <property type="term" value="F:amino acid binding"/>
    <property type="evidence" value="ECO:0007669"/>
    <property type="project" value="InterPro"/>
</dbReference>
<dbReference type="GO" id="GO:0004585">
    <property type="term" value="F:ornithine carbamoyltransferase activity"/>
    <property type="evidence" value="ECO:0007669"/>
    <property type="project" value="UniProtKB-UniRule"/>
</dbReference>
<dbReference type="GO" id="GO:0042450">
    <property type="term" value="P:arginine biosynthetic process via ornithine"/>
    <property type="evidence" value="ECO:0007669"/>
    <property type="project" value="TreeGrafter"/>
</dbReference>
<dbReference type="GO" id="GO:0019240">
    <property type="term" value="P:citrulline biosynthetic process"/>
    <property type="evidence" value="ECO:0007669"/>
    <property type="project" value="TreeGrafter"/>
</dbReference>
<dbReference type="GO" id="GO:0006526">
    <property type="term" value="P:L-arginine biosynthetic process"/>
    <property type="evidence" value="ECO:0007669"/>
    <property type="project" value="UniProtKB-UniRule"/>
</dbReference>
<dbReference type="FunFam" id="3.40.50.1370:FF:000003">
    <property type="entry name" value="Ornithine carbamoyltransferase"/>
    <property type="match status" value="1"/>
</dbReference>
<dbReference type="FunFam" id="3.40.50.1370:FF:000004">
    <property type="entry name" value="Ornithine carbamoyltransferase"/>
    <property type="match status" value="1"/>
</dbReference>
<dbReference type="Gene3D" id="3.40.50.1370">
    <property type="entry name" value="Aspartate/ornithine carbamoyltransferase"/>
    <property type="match status" value="2"/>
</dbReference>
<dbReference type="HAMAP" id="MF_01109">
    <property type="entry name" value="OTCase"/>
    <property type="match status" value="1"/>
</dbReference>
<dbReference type="InterPro" id="IPR006132">
    <property type="entry name" value="Asp/Orn_carbamoyltranf_P-bd"/>
</dbReference>
<dbReference type="InterPro" id="IPR006130">
    <property type="entry name" value="Asp/Orn_carbamoylTrfase"/>
</dbReference>
<dbReference type="InterPro" id="IPR036901">
    <property type="entry name" value="Asp/Orn_carbamoylTrfase_sf"/>
</dbReference>
<dbReference type="InterPro" id="IPR006131">
    <property type="entry name" value="Asp_carbamoyltransf_Asp/Orn-bd"/>
</dbReference>
<dbReference type="InterPro" id="IPR002292">
    <property type="entry name" value="Orn/put_carbamltrans"/>
</dbReference>
<dbReference type="InterPro" id="IPR024904">
    <property type="entry name" value="OTCase_ArgI"/>
</dbReference>
<dbReference type="NCBIfam" id="TIGR00658">
    <property type="entry name" value="orni_carb_tr"/>
    <property type="match status" value="1"/>
</dbReference>
<dbReference type="NCBIfam" id="NF003286">
    <property type="entry name" value="PRK04284.1"/>
    <property type="match status" value="1"/>
</dbReference>
<dbReference type="NCBIfam" id="NF009213">
    <property type="entry name" value="PRK12562.1"/>
    <property type="match status" value="1"/>
</dbReference>
<dbReference type="PANTHER" id="PTHR45753:SF4">
    <property type="entry name" value="ORNITHINE CARBAMOYLTRANSFERASE SUBUNIT F-RELATED"/>
    <property type="match status" value="1"/>
</dbReference>
<dbReference type="PANTHER" id="PTHR45753">
    <property type="entry name" value="ORNITHINE CARBAMOYLTRANSFERASE, MITOCHONDRIAL"/>
    <property type="match status" value="1"/>
</dbReference>
<dbReference type="Pfam" id="PF00185">
    <property type="entry name" value="OTCace"/>
    <property type="match status" value="1"/>
</dbReference>
<dbReference type="Pfam" id="PF02729">
    <property type="entry name" value="OTCace_N"/>
    <property type="match status" value="1"/>
</dbReference>
<dbReference type="PRINTS" id="PR00100">
    <property type="entry name" value="AOTCASE"/>
</dbReference>
<dbReference type="PRINTS" id="PR00102">
    <property type="entry name" value="OTCASE"/>
</dbReference>
<dbReference type="SUPFAM" id="SSF53671">
    <property type="entry name" value="Aspartate/ornithine carbamoyltransferase"/>
    <property type="match status" value="1"/>
</dbReference>
<dbReference type="PROSITE" id="PS00097">
    <property type="entry name" value="CARBAMOYLTRANSFERASE"/>
    <property type="match status" value="1"/>
</dbReference>
<proteinExistence type="inferred from homology"/>
<gene>
    <name evidence="2" type="primary">argI</name>
    <name type="ordered locus">EcolC_3758</name>
</gene>
<accession>B1ISV4</accession>
<name>OTC_ECOLC</name>
<organism>
    <name type="scientific">Escherichia coli (strain ATCC 8739 / DSM 1576 / NBRC 3972 / NCIMB 8545 / WDCM 00012 / Crooks)</name>
    <dbReference type="NCBI Taxonomy" id="481805"/>
    <lineage>
        <taxon>Bacteria</taxon>
        <taxon>Pseudomonadati</taxon>
        <taxon>Pseudomonadota</taxon>
        <taxon>Gammaproteobacteria</taxon>
        <taxon>Enterobacterales</taxon>
        <taxon>Enterobacteriaceae</taxon>
        <taxon>Escherichia</taxon>
    </lineage>
</organism>
<keyword id="KW-0028">Amino-acid biosynthesis</keyword>
<keyword id="KW-0055">Arginine biosynthesis</keyword>
<keyword id="KW-0963">Cytoplasm</keyword>
<keyword id="KW-0808">Transferase</keyword>
<feature type="chain" id="PRO_1000137095" description="Ornithine carbamoyltransferase">
    <location>
        <begin position="1"/>
        <end position="334"/>
    </location>
</feature>
<feature type="binding site" evidence="2">
    <location>
        <begin position="56"/>
        <end position="59"/>
    </location>
    <ligand>
        <name>carbamoyl phosphate</name>
        <dbReference type="ChEBI" id="CHEBI:58228"/>
    </ligand>
</feature>
<feature type="binding site" evidence="2">
    <location>
        <position position="83"/>
    </location>
    <ligand>
        <name>carbamoyl phosphate</name>
        <dbReference type="ChEBI" id="CHEBI:58228"/>
    </ligand>
</feature>
<feature type="binding site" evidence="2">
    <location>
        <position position="107"/>
    </location>
    <ligand>
        <name>carbamoyl phosphate</name>
        <dbReference type="ChEBI" id="CHEBI:58228"/>
    </ligand>
</feature>
<feature type="binding site" evidence="2">
    <location>
        <begin position="134"/>
        <end position="137"/>
    </location>
    <ligand>
        <name>carbamoyl phosphate</name>
        <dbReference type="ChEBI" id="CHEBI:58228"/>
    </ligand>
</feature>
<feature type="binding site" evidence="2">
    <location>
        <position position="168"/>
    </location>
    <ligand>
        <name>L-ornithine</name>
        <dbReference type="ChEBI" id="CHEBI:46911"/>
    </ligand>
</feature>
<feature type="binding site" evidence="2">
    <location>
        <position position="232"/>
    </location>
    <ligand>
        <name>L-ornithine</name>
        <dbReference type="ChEBI" id="CHEBI:46911"/>
    </ligand>
</feature>
<feature type="binding site" evidence="2">
    <location>
        <begin position="236"/>
        <end position="237"/>
    </location>
    <ligand>
        <name>L-ornithine</name>
        <dbReference type="ChEBI" id="CHEBI:46911"/>
    </ligand>
</feature>
<feature type="binding site" evidence="2">
    <location>
        <begin position="274"/>
        <end position="275"/>
    </location>
    <ligand>
        <name>carbamoyl phosphate</name>
        <dbReference type="ChEBI" id="CHEBI:58228"/>
    </ligand>
</feature>
<feature type="binding site" evidence="2">
    <location>
        <position position="320"/>
    </location>
    <ligand>
        <name>carbamoyl phosphate</name>
        <dbReference type="ChEBI" id="CHEBI:58228"/>
    </ligand>
</feature>
<reference key="1">
    <citation type="submission" date="2008-02" db="EMBL/GenBank/DDBJ databases">
        <title>Complete sequence of Escherichia coli C str. ATCC 8739.</title>
        <authorList>
            <person name="Copeland A."/>
            <person name="Lucas S."/>
            <person name="Lapidus A."/>
            <person name="Glavina del Rio T."/>
            <person name="Dalin E."/>
            <person name="Tice H."/>
            <person name="Bruce D."/>
            <person name="Goodwin L."/>
            <person name="Pitluck S."/>
            <person name="Kiss H."/>
            <person name="Brettin T."/>
            <person name="Detter J.C."/>
            <person name="Han C."/>
            <person name="Kuske C.R."/>
            <person name="Schmutz J."/>
            <person name="Larimer F."/>
            <person name="Land M."/>
            <person name="Hauser L."/>
            <person name="Kyrpides N."/>
            <person name="Mikhailova N."/>
            <person name="Ingram L."/>
            <person name="Richardson P."/>
        </authorList>
    </citation>
    <scope>NUCLEOTIDE SEQUENCE [LARGE SCALE GENOMIC DNA]</scope>
    <source>
        <strain>ATCC 8739 / DSM 1576 / NBRC 3972 / NCIMB 8545 / WDCM 00012 / Crooks</strain>
    </source>
</reference>
<sequence>MSGFYHKHFLKLLDFTPAELNSLLQLAAKLKADKKSGKEEAKLTGKNIALIFEKDSTRTRCSFEVAAYDQGARVTYLGPSGSQIGHKESIKDTARVLGRMYDGIQYRGYGQEIVETLAEYAGVPVWNGLTNEFHPTQLLADLLTMQEHLPGKAFNEMTLVYAGDARNNMGNSMLEAAALTGLDLRLVAPQACWPEAALVTECRALAQQNGGNITLTEDVAKGVEGADFIYTDVWVSMGEAKEKWAERIALLRDYQVNSKMMQLTGNPEVKFLHCLPAFHDDQTTLGKKMAEEFGLHGGMEVTDEVFESAASIVFDQAENRMHTIKAVMVATLSK</sequence>
<protein>
    <recommendedName>
        <fullName evidence="2">Ornithine carbamoyltransferase</fullName>
        <shortName evidence="2">OTCase</shortName>
        <ecNumber evidence="2">2.1.3.3</ecNumber>
    </recommendedName>
</protein>
<evidence type="ECO:0000250" key="1"/>
<evidence type="ECO:0000255" key="2">
    <source>
        <dbReference type="HAMAP-Rule" id="MF_01109"/>
    </source>
</evidence>